<feature type="chain" id="PRO_0000341085" description="D-alanine--D-alanine ligase">
    <location>
        <begin position="1"/>
        <end position="365"/>
    </location>
</feature>
<feature type="domain" description="ATP-grasp" evidence="2">
    <location>
        <begin position="156"/>
        <end position="360"/>
    </location>
</feature>
<feature type="binding site" evidence="2">
    <location>
        <begin position="183"/>
        <end position="238"/>
    </location>
    <ligand>
        <name>ATP</name>
        <dbReference type="ChEBI" id="CHEBI:30616"/>
    </ligand>
</feature>
<feature type="binding site" evidence="2">
    <location>
        <position position="315"/>
    </location>
    <ligand>
        <name>Mg(2+)</name>
        <dbReference type="ChEBI" id="CHEBI:18420"/>
        <label>1</label>
    </ligand>
</feature>
<feature type="binding site" evidence="2">
    <location>
        <position position="327"/>
    </location>
    <ligand>
        <name>Mg(2+)</name>
        <dbReference type="ChEBI" id="CHEBI:18420"/>
        <label>1</label>
    </ligand>
</feature>
<feature type="binding site" evidence="2">
    <location>
        <position position="327"/>
    </location>
    <ligand>
        <name>Mg(2+)</name>
        <dbReference type="ChEBI" id="CHEBI:18420"/>
        <label>2</label>
    </ligand>
</feature>
<feature type="binding site" evidence="2">
    <location>
        <position position="329"/>
    </location>
    <ligand>
        <name>Mg(2+)</name>
        <dbReference type="ChEBI" id="CHEBI:18420"/>
        <label>2</label>
    </ligand>
</feature>
<name>DDL_CORDI</name>
<sequence length="365" mass="39428">MSQNLSAQNSSETPRIKVAIIYGGRSSEHSVSCVSAGAIMAHLDPQRYEVFPVGITHDGVWTVGESDPSRLKTVDRVMPEVQFTREVSLSVNPTTAGELCFEDGSLYAKVDVVFPVLHGRFGEDGTIQGLFELSGVPYVGTGVLSSACGMDKEFTKKLMAAEGLPVGKEVILRGSETLTEEHKRELGLPVFVKPARGGSSIGISRVADWSEWDAALSLAREHDSKVIVEAEIVGVEVECGVLERIDGSLMASVPAQLQDTDEGDEGFYGFDTKYLDDVVTAHIPAPFDAETTALIQELSLKAFTALSCRGLARVDFFVTDHGPVLNEINTMPGFTPISMYPQVFEATGIGYAQLLDNLIEQALHK</sequence>
<evidence type="ECO:0000250" key="1"/>
<evidence type="ECO:0000255" key="2">
    <source>
        <dbReference type="HAMAP-Rule" id="MF_00047"/>
    </source>
</evidence>
<accession>Q6NHK6</accession>
<protein>
    <recommendedName>
        <fullName evidence="2">D-alanine--D-alanine ligase</fullName>
        <ecNumber evidence="2">6.3.2.4</ecNumber>
    </recommendedName>
    <alternativeName>
        <fullName evidence="2">D-Ala-D-Ala ligase</fullName>
    </alternativeName>
    <alternativeName>
        <fullName evidence="2">D-alanylalanine synthetase</fullName>
    </alternativeName>
</protein>
<keyword id="KW-0067">ATP-binding</keyword>
<keyword id="KW-0133">Cell shape</keyword>
<keyword id="KW-0961">Cell wall biogenesis/degradation</keyword>
<keyword id="KW-0963">Cytoplasm</keyword>
<keyword id="KW-0436">Ligase</keyword>
<keyword id="KW-0460">Magnesium</keyword>
<keyword id="KW-0464">Manganese</keyword>
<keyword id="KW-0479">Metal-binding</keyword>
<keyword id="KW-0547">Nucleotide-binding</keyword>
<keyword id="KW-0573">Peptidoglycan synthesis</keyword>
<keyword id="KW-1185">Reference proteome</keyword>
<reference key="1">
    <citation type="journal article" date="2003" name="Nucleic Acids Res.">
        <title>The complete genome sequence and analysis of Corynebacterium diphtheriae NCTC13129.</title>
        <authorList>
            <person name="Cerdeno-Tarraga A.-M."/>
            <person name="Efstratiou A."/>
            <person name="Dover L.G."/>
            <person name="Holden M.T.G."/>
            <person name="Pallen M.J."/>
            <person name="Bentley S.D."/>
            <person name="Besra G.S."/>
            <person name="Churcher C.M."/>
            <person name="James K.D."/>
            <person name="De Zoysa A."/>
            <person name="Chillingworth T."/>
            <person name="Cronin A."/>
            <person name="Dowd L."/>
            <person name="Feltwell T."/>
            <person name="Hamlin N."/>
            <person name="Holroyd S."/>
            <person name="Jagels K."/>
            <person name="Moule S."/>
            <person name="Quail M.A."/>
            <person name="Rabbinowitsch E."/>
            <person name="Rutherford K.M."/>
            <person name="Thomson N.R."/>
            <person name="Unwin L."/>
            <person name="Whitehead S."/>
            <person name="Barrell B.G."/>
            <person name="Parkhill J."/>
        </authorList>
    </citation>
    <scope>NUCLEOTIDE SEQUENCE [LARGE SCALE GENOMIC DNA]</scope>
    <source>
        <strain>ATCC 700971 / NCTC 13129 / Biotype gravis</strain>
    </source>
</reference>
<organism>
    <name type="scientific">Corynebacterium diphtheriae (strain ATCC 700971 / NCTC 13129 / Biotype gravis)</name>
    <dbReference type="NCBI Taxonomy" id="257309"/>
    <lineage>
        <taxon>Bacteria</taxon>
        <taxon>Bacillati</taxon>
        <taxon>Actinomycetota</taxon>
        <taxon>Actinomycetes</taxon>
        <taxon>Mycobacteriales</taxon>
        <taxon>Corynebacteriaceae</taxon>
        <taxon>Corynebacterium</taxon>
    </lineage>
</organism>
<comment type="function">
    <text evidence="2">Cell wall formation.</text>
</comment>
<comment type="catalytic activity">
    <reaction evidence="2">
        <text>2 D-alanine + ATP = D-alanyl-D-alanine + ADP + phosphate + H(+)</text>
        <dbReference type="Rhea" id="RHEA:11224"/>
        <dbReference type="ChEBI" id="CHEBI:15378"/>
        <dbReference type="ChEBI" id="CHEBI:30616"/>
        <dbReference type="ChEBI" id="CHEBI:43474"/>
        <dbReference type="ChEBI" id="CHEBI:57416"/>
        <dbReference type="ChEBI" id="CHEBI:57822"/>
        <dbReference type="ChEBI" id="CHEBI:456216"/>
        <dbReference type="EC" id="6.3.2.4"/>
    </reaction>
</comment>
<comment type="cofactor">
    <cofactor evidence="1">
        <name>Mg(2+)</name>
        <dbReference type="ChEBI" id="CHEBI:18420"/>
    </cofactor>
    <cofactor evidence="1">
        <name>Mn(2+)</name>
        <dbReference type="ChEBI" id="CHEBI:29035"/>
    </cofactor>
    <text evidence="1">Binds 2 magnesium or manganese ions per subunit.</text>
</comment>
<comment type="pathway">
    <text evidence="2">Cell wall biogenesis; peptidoglycan biosynthesis.</text>
</comment>
<comment type="subcellular location">
    <subcellularLocation>
        <location evidence="2">Cytoplasm</location>
    </subcellularLocation>
</comment>
<comment type="similarity">
    <text evidence="2">Belongs to the D-alanine--D-alanine ligase family.</text>
</comment>
<gene>
    <name evidence="2" type="primary">ddl</name>
    <name type="ordered locus">DIP1131</name>
</gene>
<dbReference type="EC" id="6.3.2.4" evidence="2"/>
<dbReference type="EMBL" id="BX248357">
    <property type="protein sequence ID" value="CAE49651.1"/>
    <property type="molecule type" value="Genomic_DNA"/>
</dbReference>
<dbReference type="RefSeq" id="WP_010934825.1">
    <property type="nucleotide sequence ID" value="NC_002935.2"/>
</dbReference>
<dbReference type="SMR" id="Q6NHK6"/>
<dbReference type="STRING" id="257309.DIP1131"/>
<dbReference type="KEGG" id="cdi:DIP1131"/>
<dbReference type="HOGENOM" id="CLU_039268_0_1_11"/>
<dbReference type="UniPathway" id="UPA00219"/>
<dbReference type="Proteomes" id="UP000002198">
    <property type="component" value="Chromosome"/>
</dbReference>
<dbReference type="GO" id="GO:0005829">
    <property type="term" value="C:cytosol"/>
    <property type="evidence" value="ECO:0007669"/>
    <property type="project" value="TreeGrafter"/>
</dbReference>
<dbReference type="GO" id="GO:0005524">
    <property type="term" value="F:ATP binding"/>
    <property type="evidence" value="ECO:0007669"/>
    <property type="project" value="UniProtKB-KW"/>
</dbReference>
<dbReference type="GO" id="GO:0008716">
    <property type="term" value="F:D-alanine-D-alanine ligase activity"/>
    <property type="evidence" value="ECO:0007669"/>
    <property type="project" value="UniProtKB-UniRule"/>
</dbReference>
<dbReference type="GO" id="GO:0046872">
    <property type="term" value="F:metal ion binding"/>
    <property type="evidence" value="ECO:0007669"/>
    <property type="project" value="UniProtKB-KW"/>
</dbReference>
<dbReference type="GO" id="GO:0071555">
    <property type="term" value="P:cell wall organization"/>
    <property type="evidence" value="ECO:0007669"/>
    <property type="project" value="UniProtKB-KW"/>
</dbReference>
<dbReference type="GO" id="GO:0009252">
    <property type="term" value="P:peptidoglycan biosynthetic process"/>
    <property type="evidence" value="ECO:0007669"/>
    <property type="project" value="UniProtKB-UniRule"/>
</dbReference>
<dbReference type="GO" id="GO:0008360">
    <property type="term" value="P:regulation of cell shape"/>
    <property type="evidence" value="ECO:0007669"/>
    <property type="project" value="UniProtKB-KW"/>
</dbReference>
<dbReference type="FunFam" id="3.30.470.20:FF:000008">
    <property type="entry name" value="D-alanine--D-alanine ligase"/>
    <property type="match status" value="1"/>
</dbReference>
<dbReference type="Gene3D" id="3.40.50.20">
    <property type="match status" value="1"/>
</dbReference>
<dbReference type="Gene3D" id="3.30.1490.20">
    <property type="entry name" value="ATP-grasp fold, A domain"/>
    <property type="match status" value="1"/>
</dbReference>
<dbReference type="Gene3D" id="3.30.470.20">
    <property type="entry name" value="ATP-grasp fold, B domain"/>
    <property type="match status" value="1"/>
</dbReference>
<dbReference type="HAMAP" id="MF_00047">
    <property type="entry name" value="Dala_Dala_lig"/>
    <property type="match status" value="1"/>
</dbReference>
<dbReference type="InterPro" id="IPR011761">
    <property type="entry name" value="ATP-grasp"/>
</dbReference>
<dbReference type="InterPro" id="IPR013815">
    <property type="entry name" value="ATP_grasp_subdomain_1"/>
</dbReference>
<dbReference type="InterPro" id="IPR000291">
    <property type="entry name" value="D-Ala_lig_Van_CS"/>
</dbReference>
<dbReference type="InterPro" id="IPR005905">
    <property type="entry name" value="D_ala_D_ala"/>
</dbReference>
<dbReference type="InterPro" id="IPR011095">
    <property type="entry name" value="Dala_Dala_lig_C"/>
</dbReference>
<dbReference type="InterPro" id="IPR011127">
    <property type="entry name" value="Dala_Dala_lig_N"/>
</dbReference>
<dbReference type="InterPro" id="IPR016185">
    <property type="entry name" value="PreATP-grasp_dom_sf"/>
</dbReference>
<dbReference type="NCBIfam" id="TIGR01205">
    <property type="entry name" value="D_ala_D_alaTIGR"/>
    <property type="match status" value="1"/>
</dbReference>
<dbReference type="NCBIfam" id="NF002528">
    <property type="entry name" value="PRK01966.1-4"/>
    <property type="match status" value="1"/>
</dbReference>
<dbReference type="PANTHER" id="PTHR23132">
    <property type="entry name" value="D-ALANINE--D-ALANINE LIGASE"/>
    <property type="match status" value="1"/>
</dbReference>
<dbReference type="PANTHER" id="PTHR23132:SF25">
    <property type="entry name" value="D-ALANINE--D-ALANINE LIGASE A"/>
    <property type="match status" value="1"/>
</dbReference>
<dbReference type="Pfam" id="PF07478">
    <property type="entry name" value="Dala_Dala_lig_C"/>
    <property type="match status" value="1"/>
</dbReference>
<dbReference type="Pfam" id="PF01820">
    <property type="entry name" value="Dala_Dala_lig_N"/>
    <property type="match status" value="1"/>
</dbReference>
<dbReference type="PIRSF" id="PIRSF039102">
    <property type="entry name" value="Ddl/VanB"/>
    <property type="match status" value="1"/>
</dbReference>
<dbReference type="SUPFAM" id="SSF56059">
    <property type="entry name" value="Glutathione synthetase ATP-binding domain-like"/>
    <property type="match status" value="1"/>
</dbReference>
<dbReference type="SUPFAM" id="SSF52440">
    <property type="entry name" value="PreATP-grasp domain"/>
    <property type="match status" value="1"/>
</dbReference>
<dbReference type="PROSITE" id="PS50975">
    <property type="entry name" value="ATP_GRASP"/>
    <property type="match status" value="1"/>
</dbReference>
<dbReference type="PROSITE" id="PS00843">
    <property type="entry name" value="DALA_DALA_LIGASE_1"/>
    <property type="match status" value="1"/>
</dbReference>
<dbReference type="PROSITE" id="PS00844">
    <property type="entry name" value="DALA_DALA_LIGASE_2"/>
    <property type="match status" value="1"/>
</dbReference>
<proteinExistence type="inferred from homology"/>